<proteinExistence type="inferred from homology"/>
<gene>
    <name type="primary">preA</name>
    <name type="ordered locus">slr0611</name>
</gene>
<protein>
    <recommendedName>
        <fullName>Prenyl transferase</fullName>
        <ecNumber>2.5.1.-</ecNumber>
    </recommendedName>
</protein>
<name>PREA_SYNY3</name>
<keyword id="KW-0414">Isoprene biosynthesis</keyword>
<keyword id="KW-0460">Magnesium</keyword>
<keyword id="KW-0479">Metal-binding</keyword>
<keyword id="KW-0602">Photosynthesis</keyword>
<keyword id="KW-1185">Reference proteome</keyword>
<keyword id="KW-0808">Transferase</keyword>
<accession>P72580</accession>
<accession>O08042</accession>
<accession>P74758</accession>
<comment type="function">
    <text>Possible role in synthesis of the nonaprenyl side chain of plastoquinone or in synthesis of other prenyl chains such as undekaprenyl pyrophosphate.</text>
</comment>
<comment type="cofactor">
    <cofactor evidence="1">
        <name>Mg(2+)</name>
        <dbReference type="ChEBI" id="CHEBI:18420"/>
    </cofactor>
    <text evidence="1">Binds 2 Mg(2+) ions per subunit.</text>
</comment>
<comment type="similarity">
    <text evidence="4">Belongs to the FPP/GGPP synthase family.</text>
</comment>
<sequence length="323" mass="35726">MISTTSLFAPVDQDLRLLTDNLKRLVGARHPILGAAAEHLFEAGGKRVRPAIVLLVSRATLLDQELTARHRRLAEITEMIHTASLVHDDVVDEADLRRNVPTVNSLFDNRVAVLAGDFLFAQSSWYLANLDNLEVVKLLSEVIRDFAEGEILQSINRFDTDTDLETYLEKSYFKTASLIANSAKAAGVLSDAPRDVCDHLYEYGKHLGLAFQIVDDILDFTSPTEVLGKPAGSDLISGNITAPALFAMEKYPLLGKLIEREFAQAGDLEQALELVEQGDGIRRSRELAANQAQLARQHLSVLEMSAPRESLLELVDYVLGRLH</sequence>
<reference key="1">
    <citation type="journal article" date="1995" name="DNA Res.">
        <title>Sequence analysis of the genome of the unicellular cyanobacterium Synechocystis sp. strain PCC6803. I. Sequence features in the 1 Mb region from map positions 64% to 92% of the genome.</title>
        <authorList>
            <person name="Kaneko T."/>
            <person name="Tanaka A."/>
            <person name="Sato S."/>
            <person name="Kotani H."/>
            <person name="Sazuka T."/>
            <person name="Miyajima N."/>
            <person name="Sugiura M."/>
            <person name="Tabata S."/>
        </authorList>
    </citation>
    <scope>NUCLEOTIDE SEQUENCE [LARGE SCALE GENOMIC DNA]</scope>
    <source>
        <strain>ATCC 27184 / PCC 6803 / N-1</strain>
    </source>
</reference>
<reference key="2">
    <citation type="journal article" date="1996" name="DNA Res.">
        <title>Sequence analysis of the genome of the unicellular cyanobacterium Synechocystis sp. strain PCC6803. II. Sequence determination of the entire genome and assignment of potential protein-coding regions.</title>
        <authorList>
            <person name="Kaneko T."/>
            <person name="Sato S."/>
            <person name="Kotani H."/>
            <person name="Tanaka A."/>
            <person name="Asamizu E."/>
            <person name="Nakamura Y."/>
            <person name="Miyajima N."/>
            <person name="Hirosawa M."/>
            <person name="Sugiura M."/>
            <person name="Sasamoto S."/>
            <person name="Kimura T."/>
            <person name="Hosouchi T."/>
            <person name="Matsuno A."/>
            <person name="Muraki A."/>
            <person name="Nakazaki N."/>
            <person name="Naruo K."/>
            <person name="Okumura S."/>
            <person name="Shimpo S."/>
            <person name="Takeuchi C."/>
            <person name="Wada T."/>
            <person name="Watanabe A."/>
            <person name="Yamada M."/>
            <person name="Yasuda M."/>
            <person name="Tabata S."/>
        </authorList>
    </citation>
    <scope>NUCLEOTIDE SEQUENCE [LARGE SCALE GENOMIC DNA]</scope>
    <source>
        <strain>ATCC 27184 / PCC 6803 / Kazusa</strain>
    </source>
</reference>
<dbReference type="EC" id="2.5.1.-"/>
<dbReference type="EMBL" id="BA000022">
    <property type="protein sequence ID" value="BAA16579.2"/>
    <property type="molecule type" value="Genomic_DNA"/>
</dbReference>
<dbReference type="PIR" id="S76966">
    <property type="entry name" value="S76966"/>
</dbReference>
<dbReference type="SMR" id="P72580"/>
<dbReference type="FunCoup" id="P72580">
    <property type="interactions" value="354"/>
</dbReference>
<dbReference type="IntAct" id="P72580">
    <property type="interactions" value="2"/>
</dbReference>
<dbReference type="STRING" id="1148.gene:10497434"/>
<dbReference type="PaxDb" id="1148-14595182"/>
<dbReference type="EnsemblBacteria" id="BAA16579">
    <property type="protein sequence ID" value="BAA16579"/>
    <property type="gene ID" value="BAA16579"/>
</dbReference>
<dbReference type="KEGG" id="syn:slr0611"/>
<dbReference type="eggNOG" id="COG0142">
    <property type="taxonomic scope" value="Bacteria"/>
</dbReference>
<dbReference type="InParanoid" id="P72580"/>
<dbReference type="PhylomeDB" id="P72580"/>
<dbReference type="Proteomes" id="UP000001425">
    <property type="component" value="Chromosome"/>
</dbReference>
<dbReference type="GO" id="GO:0046872">
    <property type="term" value="F:metal ion binding"/>
    <property type="evidence" value="ECO:0007669"/>
    <property type="project" value="UniProtKB-KW"/>
</dbReference>
<dbReference type="GO" id="GO:0004659">
    <property type="term" value="F:prenyltransferase activity"/>
    <property type="evidence" value="ECO:0000318"/>
    <property type="project" value="GO_Central"/>
</dbReference>
<dbReference type="GO" id="GO:0008299">
    <property type="term" value="P:isoprenoid biosynthetic process"/>
    <property type="evidence" value="ECO:0000318"/>
    <property type="project" value="GO_Central"/>
</dbReference>
<dbReference type="GO" id="GO:0015979">
    <property type="term" value="P:photosynthesis"/>
    <property type="evidence" value="ECO:0007669"/>
    <property type="project" value="UniProtKB-KW"/>
</dbReference>
<dbReference type="CDD" id="cd00685">
    <property type="entry name" value="Trans_IPPS_HT"/>
    <property type="match status" value="1"/>
</dbReference>
<dbReference type="Gene3D" id="1.10.600.10">
    <property type="entry name" value="Farnesyl Diphosphate Synthase"/>
    <property type="match status" value="1"/>
</dbReference>
<dbReference type="InterPro" id="IPR008949">
    <property type="entry name" value="Isoprenoid_synthase_dom_sf"/>
</dbReference>
<dbReference type="InterPro" id="IPR000092">
    <property type="entry name" value="Polyprenyl_synt"/>
</dbReference>
<dbReference type="InterPro" id="IPR033749">
    <property type="entry name" value="Polyprenyl_synt_CS"/>
</dbReference>
<dbReference type="NCBIfam" id="TIGR02749">
    <property type="entry name" value="prenyl_cyano"/>
    <property type="match status" value="1"/>
</dbReference>
<dbReference type="PANTHER" id="PTHR12001:SF69">
    <property type="entry name" value="ALL TRANS-POLYPRENYL-DIPHOSPHATE SYNTHASE PDSS1"/>
    <property type="match status" value="1"/>
</dbReference>
<dbReference type="PANTHER" id="PTHR12001">
    <property type="entry name" value="GERANYLGERANYL PYROPHOSPHATE SYNTHASE"/>
    <property type="match status" value="1"/>
</dbReference>
<dbReference type="Pfam" id="PF00348">
    <property type="entry name" value="polyprenyl_synt"/>
    <property type="match status" value="1"/>
</dbReference>
<dbReference type="SFLD" id="SFLDS00005">
    <property type="entry name" value="Isoprenoid_Synthase_Type_I"/>
    <property type="match status" value="1"/>
</dbReference>
<dbReference type="SUPFAM" id="SSF48576">
    <property type="entry name" value="Terpenoid synthases"/>
    <property type="match status" value="1"/>
</dbReference>
<dbReference type="PROSITE" id="PS00444">
    <property type="entry name" value="POLYPRENYL_SYNTHASE_2"/>
    <property type="match status" value="1"/>
</dbReference>
<evidence type="ECO:0000250" key="1"/>
<evidence type="ECO:0000250" key="2">
    <source>
        <dbReference type="UniProtKB" id="P14324"/>
    </source>
</evidence>
<evidence type="ECO:0000250" key="3">
    <source>
        <dbReference type="UniProtKB" id="Q12051"/>
    </source>
</evidence>
<evidence type="ECO:0000305" key="4"/>
<organism>
    <name type="scientific">Synechocystis sp. (strain ATCC 27184 / PCC 6803 / Kazusa)</name>
    <dbReference type="NCBI Taxonomy" id="1111708"/>
    <lineage>
        <taxon>Bacteria</taxon>
        <taxon>Bacillati</taxon>
        <taxon>Cyanobacteriota</taxon>
        <taxon>Cyanophyceae</taxon>
        <taxon>Synechococcales</taxon>
        <taxon>Merismopediaceae</taxon>
        <taxon>Synechocystis</taxon>
    </lineage>
</organism>
<feature type="chain" id="PRO_0000123997" description="Prenyl transferase">
    <location>
        <begin position="1"/>
        <end position="323"/>
    </location>
</feature>
<feature type="binding site" evidence="2">
    <location>
        <position position="46"/>
    </location>
    <ligand>
        <name>isopentenyl diphosphate</name>
        <dbReference type="ChEBI" id="CHEBI:128769"/>
    </ligand>
</feature>
<feature type="binding site" evidence="2">
    <location>
        <position position="49"/>
    </location>
    <ligand>
        <name>isopentenyl diphosphate</name>
        <dbReference type="ChEBI" id="CHEBI:128769"/>
    </ligand>
</feature>
<feature type="binding site" evidence="3">
    <location>
        <position position="81"/>
    </location>
    <ligand>
        <name>isopentenyl diphosphate</name>
        <dbReference type="ChEBI" id="CHEBI:128769"/>
    </ligand>
</feature>
<feature type="binding site" evidence="2">
    <location>
        <position position="88"/>
    </location>
    <ligand>
        <name>Mg(2+)</name>
        <dbReference type="ChEBI" id="CHEBI:18420"/>
        <label>1</label>
    </ligand>
</feature>
<feature type="binding site" evidence="2">
    <location>
        <position position="88"/>
    </location>
    <ligand>
        <name>Mg(2+)</name>
        <dbReference type="ChEBI" id="CHEBI:18420"/>
        <label>2</label>
    </ligand>
</feature>
<feature type="binding site" evidence="2">
    <location>
        <position position="92"/>
    </location>
    <ligand>
        <name>Mg(2+)</name>
        <dbReference type="ChEBI" id="CHEBI:18420"/>
        <label>1</label>
    </ligand>
</feature>
<feature type="binding site" evidence="2">
    <location>
        <position position="92"/>
    </location>
    <ligand>
        <name>Mg(2+)</name>
        <dbReference type="ChEBI" id="CHEBI:18420"/>
        <label>2</label>
    </ligand>
</feature>
<feature type="binding site" evidence="1">
    <location>
        <position position="97"/>
    </location>
    <ligand>
        <name>an all-trans-polyprenyl diphosphate</name>
        <dbReference type="ChEBI" id="CHEBI:58914"/>
    </ligand>
</feature>
<feature type="binding site" evidence="2">
    <location>
        <position position="98"/>
    </location>
    <ligand>
        <name>isopentenyl diphosphate</name>
        <dbReference type="ChEBI" id="CHEBI:128769"/>
    </ligand>
</feature>
<feature type="binding site" evidence="1">
    <location>
        <position position="174"/>
    </location>
    <ligand>
        <name>an all-trans-polyprenyl diphosphate</name>
        <dbReference type="ChEBI" id="CHEBI:58914"/>
    </ligand>
</feature>
<feature type="binding site" evidence="1">
    <location>
        <position position="175"/>
    </location>
    <ligand>
        <name>an all-trans-polyprenyl diphosphate</name>
        <dbReference type="ChEBI" id="CHEBI:58914"/>
    </ligand>
</feature>
<feature type="binding site" evidence="1">
    <location>
        <position position="212"/>
    </location>
    <ligand>
        <name>an all-trans-polyprenyl diphosphate</name>
        <dbReference type="ChEBI" id="CHEBI:58914"/>
    </ligand>
</feature>